<comment type="function">
    <text>Core subunit of the mitochondrial membrane respiratory chain NADH dehydrogenase (Complex I) that is believed to belong to the minimal assembly required for catalysis. Complex I functions in the transfer of electrons from NADH to the respiratory chain. The immediate electron acceptor for the enzyme is believed to be ubiquinone.</text>
</comment>
<comment type="catalytic activity">
    <reaction>
        <text>a ubiquinone + NADH + 5 H(+)(in) = a ubiquinol + NAD(+) + 4 H(+)(out)</text>
        <dbReference type="Rhea" id="RHEA:29091"/>
        <dbReference type="Rhea" id="RHEA-COMP:9565"/>
        <dbReference type="Rhea" id="RHEA-COMP:9566"/>
        <dbReference type="ChEBI" id="CHEBI:15378"/>
        <dbReference type="ChEBI" id="CHEBI:16389"/>
        <dbReference type="ChEBI" id="CHEBI:17976"/>
        <dbReference type="ChEBI" id="CHEBI:57540"/>
        <dbReference type="ChEBI" id="CHEBI:57945"/>
        <dbReference type="EC" id="7.1.1.2"/>
    </reaction>
</comment>
<comment type="subcellular location">
    <subcellularLocation>
        <location evidence="2">Mitochondrion membrane</location>
    </subcellularLocation>
</comment>
<comment type="similarity">
    <text evidence="2">Belongs to the complex I subunit 3 family.</text>
</comment>
<comment type="sequence caution" evidence="2">
    <conflict type="erroneous gene model prediction">
        <sequence resource="EMBL-CDS" id="CAA27419"/>
    </conflict>
</comment>
<keyword id="KW-0249">Electron transport</keyword>
<keyword id="KW-0472">Membrane</keyword>
<keyword id="KW-0496">Mitochondrion</keyword>
<keyword id="KW-0520">NAD</keyword>
<keyword id="KW-1185">Reference proteome</keyword>
<keyword id="KW-0679">Respiratory chain</keyword>
<keyword id="KW-1278">Translocase</keyword>
<keyword id="KW-0812">Transmembrane</keyword>
<keyword id="KW-1133">Transmembrane helix</keyword>
<keyword id="KW-0813">Transport</keyword>
<keyword id="KW-0830">Ubiquinone</keyword>
<name>NU3M_NEUCR</name>
<dbReference type="EC" id="7.1.1.2"/>
<dbReference type="EMBL" id="X03793">
    <property type="protein sequence ID" value="CAA27419.1"/>
    <property type="status" value="ALT_SEQ"/>
    <property type="molecule type" value="Genomic_DNA"/>
</dbReference>
<dbReference type="EMBL" id="KC683708">
    <property type="protein sequence ID" value="AGG15996.1"/>
    <property type="molecule type" value="Genomic_DNA"/>
</dbReference>
<dbReference type="RefSeq" id="YP_009126708.1">
    <property type="nucleotide sequence ID" value="NC_026614.1"/>
</dbReference>
<dbReference type="SMR" id="Q35141"/>
<dbReference type="STRING" id="367110.Q35141"/>
<dbReference type="TCDB" id="3.D.1.6.2">
    <property type="family name" value="the h+ or na+-translocating nadh dehydrogenase (ndh) family"/>
</dbReference>
<dbReference type="EnsemblFungi" id="AGG15996">
    <property type="protein sequence ID" value="AGG15996"/>
    <property type="gene ID" value="NCU16007"/>
</dbReference>
<dbReference type="GeneID" id="23681560"/>
<dbReference type="KEGG" id="ncr:NCU16007"/>
<dbReference type="VEuPathDB" id="FungiDB:NCU16007"/>
<dbReference type="InParanoid" id="Q35141"/>
<dbReference type="OrthoDB" id="154075at2759"/>
<dbReference type="Proteomes" id="UP000001805">
    <property type="component" value="Mitochondrion"/>
</dbReference>
<dbReference type="GO" id="GO:0031966">
    <property type="term" value="C:mitochondrial membrane"/>
    <property type="evidence" value="ECO:0007669"/>
    <property type="project" value="UniProtKB-SubCell"/>
</dbReference>
<dbReference type="GO" id="GO:0045271">
    <property type="term" value="C:respiratory chain complex I"/>
    <property type="evidence" value="ECO:0000318"/>
    <property type="project" value="GO_Central"/>
</dbReference>
<dbReference type="GO" id="GO:0008137">
    <property type="term" value="F:NADH dehydrogenase (ubiquinone) activity"/>
    <property type="evidence" value="ECO:0000318"/>
    <property type="project" value="GO_Central"/>
</dbReference>
<dbReference type="Gene3D" id="1.20.58.1610">
    <property type="entry name" value="NADH:ubiquinone/plastoquinone oxidoreductase, chain 3"/>
    <property type="match status" value="1"/>
</dbReference>
<dbReference type="InterPro" id="IPR000440">
    <property type="entry name" value="NADH_UbQ/plastoQ_OxRdtase_su3"/>
</dbReference>
<dbReference type="InterPro" id="IPR038430">
    <property type="entry name" value="NDAH_ubi_oxred_su3_sf"/>
</dbReference>
<dbReference type="PANTHER" id="PTHR11058">
    <property type="entry name" value="NADH-UBIQUINONE OXIDOREDUCTASE CHAIN 3"/>
    <property type="match status" value="1"/>
</dbReference>
<dbReference type="PANTHER" id="PTHR11058:SF9">
    <property type="entry name" value="NADH-UBIQUINONE OXIDOREDUCTASE CHAIN 3"/>
    <property type="match status" value="1"/>
</dbReference>
<dbReference type="Pfam" id="PF00507">
    <property type="entry name" value="Oxidored_q4"/>
    <property type="match status" value="1"/>
</dbReference>
<feature type="chain" id="PRO_0000117771" description="NADH-ubiquinone oxidoreductase chain 3">
    <location>
        <begin position="1"/>
        <end position="147"/>
    </location>
</feature>
<feature type="transmembrane region" description="Helical" evidence="1">
    <location>
        <begin position="6"/>
        <end position="26"/>
    </location>
</feature>
<feature type="transmembrane region" description="Helical" evidence="1">
    <location>
        <begin position="60"/>
        <end position="80"/>
    </location>
</feature>
<feature type="transmembrane region" description="Helical" evidence="1">
    <location>
        <begin position="84"/>
        <end position="104"/>
    </location>
</feature>
<proteinExistence type="inferred from homology"/>
<reference key="1">
    <citation type="journal article" date="2003" name="Nature">
        <title>The genome sequence of the filamentous fungus Neurospora crassa.</title>
        <authorList>
            <person name="Galagan J.E."/>
            <person name="Calvo S.E."/>
            <person name="Borkovich K.A."/>
            <person name="Selker E.U."/>
            <person name="Read N.D."/>
            <person name="Jaffe D.B."/>
            <person name="FitzHugh W."/>
            <person name="Ma L.-J."/>
            <person name="Smirnov S."/>
            <person name="Purcell S."/>
            <person name="Rehman B."/>
            <person name="Elkins T."/>
            <person name="Engels R."/>
            <person name="Wang S."/>
            <person name="Nielsen C.B."/>
            <person name="Butler J."/>
            <person name="Endrizzi M."/>
            <person name="Qui D."/>
            <person name="Ianakiev P."/>
            <person name="Bell-Pedersen D."/>
            <person name="Nelson M.A."/>
            <person name="Werner-Washburne M."/>
            <person name="Selitrennikoff C.P."/>
            <person name="Kinsey J.A."/>
            <person name="Braun E.L."/>
            <person name="Zelter A."/>
            <person name="Schulte U."/>
            <person name="Kothe G.O."/>
            <person name="Jedd G."/>
            <person name="Mewes H.-W."/>
            <person name="Staben C."/>
            <person name="Marcotte E."/>
            <person name="Greenberg D."/>
            <person name="Roy A."/>
            <person name="Foley K."/>
            <person name="Naylor J."/>
            <person name="Stange-Thomann N."/>
            <person name="Barrett R."/>
            <person name="Gnerre S."/>
            <person name="Kamal M."/>
            <person name="Kamvysselis M."/>
            <person name="Mauceli E.W."/>
            <person name="Bielke C."/>
            <person name="Rudd S."/>
            <person name="Frishman D."/>
            <person name="Krystofova S."/>
            <person name="Rasmussen C."/>
            <person name="Metzenberg R.L."/>
            <person name="Perkins D.D."/>
            <person name="Kroken S."/>
            <person name="Cogoni C."/>
            <person name="Macino G."/>
            <person name="Catcheside D.E.A."/>
            <person name="Li W."/>
            <person name="Pratt R.J."/>
            <person name="Osmani S.A."/>
            <person name="DeSouza C.P.C."/>
            <person name="Glass N.L."/>
            <person name="Orbach M.J."/>
            <person name="Berglund J.A."/>
            <person name="Voelker R."/>
            <person name="Yarden O."/>
            <person name="Plamann M."/>
            <person name="Seiler S."/>
            <person name="Dunlap J.C."/>
            <person name="Radford A."/>
            <person name="Aramayo R."/>
            <person name="Natvig D.O."/>
            <person name="Alex L.A."/>
            <person name="Mannhaupt G."/>
            <person name="Ebbole D.J."/>
            <person name="Freitag M."/>
            <person name="Paulsen I."/>
            <person name="Sachs M.S."/>
            <person name="Lander E.S."/>
            <person name="Nusbaum C."/>
            <person name="Birren B.W."/>
        </authorList>
    </citation>
    <scope>NUCLEOTIDE SEQUENCE [LARGE SCALE GENOMIC DNA]</scope>
    <source>
        <strain>ATCC 24698 / 74-OR23-1A / CBS 708.71 / DSM 1257 / FGSC 987</strain>
    </source>
</reference>
<reference key="2">
    <citation type="book" date="2004" name="The Mycota II, Genetics and Biotechnology (2nd edition)">
        <title>Mitochondrial genetics of Neurospora.</title>
        <editorList>
            <person name="Kueck U."/>
        </editorList>
        <authorList>
            <person name="Kennell J.C."/>
            <person name="Collins R.A."/>
            <person name="Griffiths A.J.F."/>
            <person name="Nargang F.E."/>
        </authorList>
    </citation>
    <scope>GENOME REANNOTATION</scope>
    <source>
        <strain>ATCC 24698 / 74-OR23-1A / CBS 708.71 / DSM 1257 / FGSC 987</strain>
    </source>
</reference>
<reference key="3">
    <citation type="journal article" date="1986" name="EMBO J.">
        <title>The E35 stopper mutant of Neurospora crassa: precise localization of deletion endpoints in mitochondrial DNA and evidence that the deleted DNA codes for a subunit of NADH dehydrogenase.</title>
        <authorList>
            <person name="de Vries H."/>
            <person name="Alzner-Deweerd B."/>
            <person name="Breitenberger C.A."/>
            <person name="Chang D.D."/>
            <person name="de Jonge J.C."/>
            <person name="RajBhandary U.L."/>
        </authorList>
    </citation>
    <scope>NUCLEOTIDE SEQUENCE [GENOMIC DNA] OF 1-30</scope>
</reference>
<protein>
    <recommendedName>
        <fullName>NADH-ubiquinone oxidoreductase chain 3</fullName>
        <ecNumber>7.1.1.2</ecNumber>
    </recommendedName>
    <alternativeName>
        <fullName>NADH dehydrogenase subunit 3</fullName>
    </alternativeName>
</protein>
<accession>Q35141</accession>
<accession>M1RFR0</accession>
<organism>
    <name type="scientific">Neurospora crassa (strain ATCC 24698 / 74-OR23-1A / CBS 708.71 / DSM 1257 / FGSC 987)</name>
    <dbReference type="NCBI Taxonomy" id="367110"/>
    <lineage>
        <taxon>Eukaryota</taxon>
        <taxon>Fungi</taxon>
        <taxon>Dikarya</taxon>
        <taxon>Ascomycota</taxon>
        <taxon>Pezizomycotina</taxon>
        <taxon>Sordariomycetes</taxon>
        <taxon>Sordariomycetidae</taxon>
        <taxon>Sordariales</taxon>
        <taxon>Sordariaceae</taxon>
        <taxon>Neurospora</taxon>
    </lineage>
</organism>
<evidence type="ECO:0000255" key="1"/>
<evidence type="ECO:0000305" key="2"/>
<sequence length="147" mass="16454">MRSMTLFILFVSIIALLFLLINLVFAPHIPYQEKNSEFECGFHSFHQTRFPFDSPIAAQAICFVILDLEIFTMFPYVGSLGINTFYSLVVILGFMFVVSAGFVFELGKGALKIDSKQNMGGDSTHLELKNLKDISSLNLCPPSAFKN</sequence>
<geneLocation type="mitochondrion"/>
<gene>
    <name type="primary">ndh-3</name>
    <name type="synonym">ND3</name>
    <name type="ORF">NCU16007</name>
</gene>